<name>CLPX1_WOLSU</name>
<comment type="function">
    <text evidence="1">ATP-dependent specificity component of the Clp protease. It directs the protease to specific substrates. Can perform chaperone functions in the absence of ClpP.</text>
</comment>
<comment type="subunit">
    <text evidence="1">Component of the ClpX-ClpP complex. Forms a hexameric ring that, in the presence of ATP, binds to fourteen ClpP subunits assembled into a disk-like structure with a central cavity, resembling the structure of eukaryotic proteasomes.</text>
</comment>
<comment type="similarity">
    <text evidence="1">Belongs to the ClpX chaperone family.</text>
</comment>
<protein>
    <recommendedName>
        <fullName evidence="1">ATP-dependent Clp protease ATP-binding subunit ClpX 1</fullName>
    </recommendedName>
</protein>
<organism>
    <name type="scientific">Wolinella succinogenes (strain ATCC 29543 / DSM 1740 / CCUG 13145 / JCM 31913 / LMG 7466 / NCTC 11488 / FDC 602W)</name>
    <name type="common">Vibrio succinogenes</name>
    <dbReference type="NCBI Taxonomy" id="273121"/>
    <lineage>
        <taxon>Bacteria</taxon>
        <taxon>Pseudomonadati</taxon>
        <taxon>Campylobacterota</taxon>
        <taxon>Epsilonproteobacteria</taxon>
        <taxon>Campylobacterales</taxon>
        <taxon>Helicobacteraceae</taxon>
        <taxon>Wolinella</taxon>
    </lineage>
</organism>
<dbReference type="EMBL" id="BX571657">
    <property type="protein sequence ID" value="CAE09227.1"/>
    <property type="molecule type" value="Genomic_DNA"/>
</dbReference>
<dbReference type="RefSeq" id="WP_011138027.1">
    <property type="nucleotide sequence ID" value="NC_005090.1"/>
</dbReference>
<dbReference type="SMR" id="Q7MAS4"/>
<dbReference type="STRING" id="273121.WS0058"/>
<dbReference type="KEGG" id="wsu:WS0058"/>
<dbReference type="eggNOG" id="COG1219">
    <property type="taxonomic scope" value="Bacteria"/>
</dbReference>
<dbReference type="HOGENOM" id="CLU_014218_8_2_7"/>
<dbReference type="Proteomes" id="UP000000422">
    <property type="component" value="Chromosome"/>
</dbReference>
<dbReference type="GO" id="GO:0009376">
    <property type="term" value="C:HslUV protease complex"/>
    <property type="evidence" value="ECO:0007669"/>
    <property type="project" value="TreeGrafter"/>
</dbReference>
<dbReference type="GO" id="GO:0005524">
    <property type="term" value="F:ATP binding"/>
    <property type="evidence" value="ECO:0007669"/>
    <property type="project" value="UniProtKB-UniRule"/>
</dbReference>
<dbReference type="GO" id="GO:0016887">
    <property type="term" value="F:ATP hydrolysis activity"/>
    <property type="evidence" value="ECO:0007669"/>
    <property type="project" value="InterPro"/>
</dbReference>
<dbReference type="GO" id="GO:0140662">
    <property type="term" value="F:ATP-dependent protein folding chaperone"/>
    <property type="evidence" value="ECO:0007669"/>
    <property type="project" value="InterPro"/>
</dbReference>
<dbReference type="GO" id="GO:0046983">
    <property type="term" value="F:protein dimerization activity"/>
    <property type="evidence" value="ECO:0007669"/>
    <property type="project" value="InterPro"/>
</dbReference>
<dbReference type="GO" id="GO:0051082">
    <property type="term" value="F:unfolded protein binding"/>
    <property type="evidence" value="ECO:0007669"/>
    <property type="project" value="UniProtKB-UniRule"/>
</dbReference>
<dbReference type="GO" id="GO:0008270">
    <property type="term" value="F:zinc ion binding"/>
    <property type="evidence" value="ECO:0007669"/>
    <property type="project" value="InterPro"/>
</dbReference>
<dbReference type="GO" id="GO:0051301">
    <property type="term" value="P:cell division"/>
    <property type="evidence" value="ECO:0007669"/>
    <property type="project" value="TreeGrafter"/>
</dbReference>
<dbReference type="GO" id="GO:0051603">
    <property type="term" value="P:proteolysis involved in protein catabolic process"/>
    <property type="evidence" value="ECO:0007669"/>
    <property type="project" value="TreeGrafter"/>
</dbReference>
<dbReference type="CDD" id="cd19497">
    <property type="entry name" value="RecA-like_ClpX"/>
    <property type="match status" value="1"/>
</dbReference>
<dbReference type="FunFam" id="1.10.8.60:FF:000002">
    <property type="entry name" value="ATP-dependent Clp protease ATP-binding subunit ClpX"/>
    <property type="match status" value="1"/>
</dbReference>
<dbReference type="FunFam" id="3.40.50.300:FF:000005">
    <property type="entry name" value="ATP-dependent Clp protease ATP-binding subunit ClpX"/>
    <property type="match status" value="1"/>
</dbReference>
<dbReference type="Gene3D" id="1.10.8.60">
    <property type="match status" value="1"/>
</dbReference>
<dbReference type="Gene3D" id="6.20.220.10">
    <property type="entry name" value="ClpX chaperone, C4-type zinc finger domain"/>
    <property type="match status" value="1"/>
</dbReference>
<dbReference type="Gene3D" id="3.40.50.300">
    <property type="entry name" value="P-loop containing nucleotide triphosphate hydrolases"/>
    <property type="match status" value="1"/>
</dbReference>
<dbReference type="HAMAP" id="MF_00175">
    <property type="entry name" value="ClpX"/>
    <property type="match status" value="1"/>
</dbReference>
<dbReference type="InterPro" id="IPR003593">
    <property type="entry name" value="AAA+_ATPase"/>
</dbReference>
<dbReference type="InterPro" id="IPR050052">
    <property type="entry name" value="ATP-dep_Clp_protease_ClpX"/>
</dbReference>
<dbReference type="InterPro" id="IPR003959">
    <property type="entry name" value="ATPase_AAA_core"/>
</dbReference>
<dbReference type="InterPro" id="IPR019489">
    <property type="entry name" value="Clp_ATPase_C"/>
</dbReference>
<dbReference type="InterPro" id="IPR004487">
    <property type="entry name" value="Clp_protease_ATP-bd_su_ClpX"/>
</dbReference>
<dbReference type="InterPro" id="IPR046425">
    <property type="entry name" value="ClpX_bact"/>
</dbReference>
<dbReference type="InterPro" id="IPR027417">
    <property type="entry name" value="P-loop_NTPase"/>
</dbReference>
<dbReference type="InterPro" id="IPR010603">
    <property type="entry name" value="Znf_CppX_C4"/>
</dbReference>
<dbReference type="InterPro" id="IPR038366">
    <property type="entry name" value="Znf_CppX_C4_sf"/>
</dbReference>
<dbReference type="NCBIfam" id="TIGR00382">
    <property type="entry name" value="clpX"/>
    <property type="match status" value="1"/>
</dbReference>
<dbReference type="NCBIfam" id="NF003745">
    <property type="entry name" value="PRK05342.1"/>
    <property type="match status" value="1"/>
</dbReference>
<dbReference type="PANTHER" id="PTHR48102:SF7">
    <property type="entry name" value="ATP-DEPENDENT CLP PROTEASE ATP-BINDING SUBUNIT CLPX-LIKE, MITOCHONDRIAL"/>
    <property type="match status" value="1"/>
</dbReference>
<dbReference type="PANTHER" id="PTHR48102">
    <property type="entry name" value="ATP-DEPENDENT CLP PROTEASE ATP-BINDING SUBUNIT CLPX-LIKE, MITOCHONDRIAL-RELATED"/>
    <property type="match status" value="1"/>
</dbReference>
<dbReference type="Pfam" id="PF07724">
    <property type="entry name" value="AAA_2"/>
    <property type="match status" value="1"/>
</dbReference>
<dbReference type="Pfam" id="PF10431">
    <property type="entry name" value="ClpB_D2-small"/>
    <property type="match status" value="1"/>
</dbReference>
<dbReference type="Pfam" id="PF06689">
    <property type="entry name" value="zf-C4_ClpX"/>
    <property type="match status" value="1"/>
</dbReference>
<dbReference type="SMART" id="SM00382">
    <property type="entry name" value="AAA"/>
    <property type="match status" value="1"/>
</dbReference>
<dbReference type="SMART" id="SM01086">
    <property type="entry name" value="ClpB_D2-small"/>
    <property type="match status" value="1"/>
</dbReference>
<dbReference type="SMART" id="SM00994">
    <property type="entry name" value="zf-C4_ClpX"/>
    <property type="match status" value="1"/>
</dbReference>
<dbReference type="SUPFAM" id="SSF57716">
    <property type="entry name" value="Glucocorticoid receptor-like (DNA-binding domain)"/>
    <property type="match status" value="1"/>
</dbReference>
<dbReference type="SUPFAM" id="SSF52540">
    <property type="entry name" value="P-loop containing nucleoside triphosphate hydrolases"/>
    <property type="match status" value="1"/>
</dbReference>
<dbReference type="PROSITE" id="PS51902">
    <property type="entry name" value="CLPX_ZB"/>
    <property type="match status" value="1"/>
</dbReference>
<feature type="chain" id="PRO_0000160457" description="ATP-dependent Clp protease ATP-binding subunit ClpX 1">
    <location>
        <begin position="1"/>
        <end position="417"/>
    </location>
</feature>
<feature type="domain" description="ClpX-type ZB" evidence="2">
    <location>
        <begin position="1"/>
        <end position="47"/>
    </location>
</feature>
<feature type="binding site" evidence="2">
    <location>
        <position position="6"/>
    </location>
    <ligand>
        <name>Zn(2+)</name>
        <dbReference type="ChEBI" id="CHEBI:29105"/>
    </ligand>
</feature>
<feature type="binding site" evidence="2">
    <location>
        <position position="9"/>
    </location>
    <ligand>
        <name>Zn(2+)</name>
        <dbReference type="ChEBI" id="CHEBI:29105"/>
    </ligand>
</feature>
<feature type="binding site" evidence="2">
    <location>
        <position position="28"/>
    </location>
    <ligand>
        <name>Zn(2+)</name>
        <dbReference type="ChEBI" id="CHEBI:29105"/>
    </ligand>
</feature>
<feature type="binding site" evidence="2">
    <location>
        <position position="31"/>
    </location>
    <ligand>
        <name>Zn(2+)</name>
        <dbReference type="ChEBI" id="CHEBI:29105"/>
    </ligand>
</feature>
<feature type="binding site" evidence="1">
    <location>
        <begin position="119"/>
        <end position="126"/>
    </location>
    <ligand>
        <name>ATP</name>
        <dbReference type="ChEBI" id="CHEBI:30616"/>
    </ligand>
</feature>
<sequence length="417" mass="46491">MNSRQCSFCRAKETKTNPLIAGNSVYICKNCVISAYKILFGEMERESDPLPEEEEGIDYIPTPKELKSALDEYVIGQERAKKVFSVAVYNHYKRIFKKELLEEEDETEISKSNILLIGPTGSGKTLMAQTLARFLNVPIAICDATSLTEAGYVGEDVENILTRLLQAAEGDVKKAERGIVFIDEIDKISRLSENRSITRDVSGEGVQQALLKIIEGSVVNVPPKGGRKHPNQDFVQIDTSQILFICGGAFDGMIELIKRRMGGNSLGFHGDKKGKSEESALLHLVEPDDLVSYGLIPELIGRLHVITTLDEITKEAMLEILTKPKNALVKQYQKLFTMDEAELSFEPEALEAIAELAIKRKTGARGLRAIIEEVTLDLMYDLPELKEYEVIITKECVENRDAKPLLIKKKKNGKKSA</sequence>
<accession>Q7MAS4</accession>
<proteinExistence type="inferred from homology"/>
<evidence type="ECO:0000255" key="1">
    <source>
        <dbReference type="HAMAP-Rule" id="MF_00175"/>
    </source>
</evidence>
<evidence type="ECO:0000255" key="2">
    <source>
        <dbReference type="PROSITE-ProRule" id="PRU01250"/>
    </source>
</evidence>
<reference key="1">
    <citation type="journal article" date="2003" name="Proc. Natl. Acad. Sci. U.S.A.">
        <title>Complete genome sequence and analysis of Wolinella succinogenes.</title>
        <authorList>
            <person name="Baar C."/>
            <person name="Eppinger M."/>
            <person name="Raddatz G."/>
            <person name="Simon J."/>
            <person name="Lanz C."/>
            <person name="Klimmek O."/>
            <person name="Nandakumar R."/>
            <person name="Gross R."/>
            <person name="Rosinus A."/>
            <person name="Keller H."/>
            <person name="Jagtap P."/>
            <person name="Linke B."/>
            <person name="Meyer F."/>
            <person name="Lederer H."/>
            <person name="Schuster S.C."/>
        </authorList>
    </citation>
    <scope>NUCLEOTIDE SEQUENCE [LARGE SCALE GENOMIC DNA]</scope>
    <source>
        <strain>ATCC 29543 / DSM 1740 / CCUG 13145 / JCM 31913 / LMG 7466 / NCTC 11488 / FDC 602W</strain>
    </source>
</reference>
<gene>
    <name evidence="1" type="primary">clpX1</name>
    <name type="ordered locus">WS0058</name>
</gene>
<keyword id="KW-0067">ATP-binding</keyword>
<keyword id="KW-0143">Chaperone</keyword>
<keyword id="KW-0479">Metal-binding</keyword>
<keyword id="KW-0547">Nucleotide-binding</keyword>
<keyword id="KW-1185">Reference proteome</keyword>
<keyword id="KW-0862">Zinc</keyword>